<comment type="function">
    <text evidence="1">Binds to actin and affects the structure of the cytoskeleton. At high concentrations, profilin prevents the polymerization of actin, whereas it enhances it at low concentrations (By similarity).</text>
</comment>
<comment type="subunit">
    <text evidence="1">Occurs in many kinds of cells as a complex with monomeric actin in a 1:1 ratio.</text>
</comment>
<comment type="subcellular location">
    <subcellularLocation>
        <location evidence="1">Cytoplasm</location>
        <location evidence="1">Cytoskeleton</location>
    </subcellularLocation>
</comment>
<comment type="PTM">
    <text evidence="1">Phosphorylated by MAP kinases.</text>
</comment>
<comment type="polymorphism">
    <text>Several isoforms of the allergen exist due to polymorphism.</text>
</comment>
<comment type="allergen">
    <text>Causes an allergic reaction in human.</text>
</comment>
<comment type="miscellaneous">
    <text evidence="3">The variability of the residues taking part of IgE-binding epitopes might be responsible of the difference in cross-reactivity among olive pollen cultivars, and between distantly related pollen species, leading to a variable range of allergy reactions among atopic patients.</text>
</comment>
<comment type="similarity">
    <text evidence="2">Belongs to the profilin family.</text>
</comment>
<organism>
    <name type="scientific">Zea mays</name>
    <name type="common">Maize</name>
    <dbReference type="NCBI Taxonomy" id="4577"/>
    <lineage>
        <taxon>Eukaryota</taxon>
        <taxon>Viridiplantae</taxon>
        <taxon>Streptophyta</taxon>
        <taxon>Embryophyta</taxon>
        <taxon>Tracheophyta</taxon>
        <taxon>Spermatophyta</taxon>
        <taxon>Magnoliopsida</taxon>
        <taxon>Liliopsida</taxon>
        <taxon>Poales</taxon>
        <taxon>Poaceae</taxon>
        <taxon>PACMAD clade</taxon>
        <taxon>Panicoideae</taxon>
        <taxon>Andropogonodae</taxon>
        <taxon>Andropogoneae</taxon>
        <taxon>Tripsacinae</taxon>
        <taxon>Zea</taxon>
    </lineage>
</organism>
<keyword id="KW-0009">Actin-binding</keyword>
<keyword id="KW-0020">Allergen</keyword>
<keyword id="KW-0963">Cytoplasm</keyword>
<keyword id="KW-0206">Cytoskeleton</keyword>
<keyword id="KW-1015">Disulfide bond</keyword>
<keyword id="KW-0597">Phosphoprotein</keyword>
<keyword id="KW-1185">Reference proteome</keyword>
<reference key="1">
    <citation type="journal article" date="2012" name="PLoS ONE">
        <title>Characterization of profilin polymorphism in pollen with a focus on multifunctionality.</title>
        <authorList>
            <person name="Jimenez-Lopez J.C."/>
            <person name="Morales S."/>
            <person name="Castro A.J."/>
            <person name="Volkmann D."/>
            <person name="Rodriguez-Garcia M.I."/>
            <person name="Alche Jde D."/>
        </authorList>
    </citation>
    <scope>NUCLEOTIDE SEQUENCE [MRNA]</scope>
    <scope>POLYMORPHISM</scope>
    <source>
        <strain>cv. Birko</strain>
    </source>
</reference>
<reference key="2">
    <citation type="journal article" date="2013" name="PLoS ONE">
        <title>Analysis of the effects of polymorphism on pollen profilin structural functionality and the generation of conformational, T- and B-cell epitopes.</title>
        <authorList>
            <person name="Jimenez-Lopez J.C."/>
            <person name="Rodriguez-Garcia M.I."/>
            <person name="Alche J.D."/>
        </authorList>
    </citation>
    <scope>3D-STRUCTURE MODELING</scope>
    <scope>DISULFIDE BOND</scope>
</reference>
<proteinExistence type="evidence at protein level"/>
<accession>A4KA59</accession>
<evidence type="ECO:0000250" key="1"/>
<evidence type="ECO:0000305" key="2"/>
<evidence type="ECO:0000305" key="3">
    <source>
    </source>
</evidence>
<feature type="initiator methionine" description="Removed" evidence="1">
    <location>
        <position position="1"/>
    </location>
</feature>
<feature type="chain" id="PRO_0000425069" description="Profilin-10">
    <location>
        <begin position="2"/>
        <end position="131"/>
    </location>
</feature>
<feature type="short sequence motif" description="Involved in PIP2 interaction">
    <location>
        <begin position="81"/>
        <end position="97"/>
    </location>
</feature>
<feature type="modified residue" description="Phosphothreonine" evidence="1">
    <location>
        <position position="111"/>
    </location>
</feature>
<feature type="disulfide bond" evidence="3">
    <location>
        <begin position="13"/>
        <end position="115"/>
    </location>
</feature>
<dbReference type="EMBL" id="DQ663563">
    <property type="protein sequence ID" value="ABG81316.1"/>
    <property type="molecule type" value="mRNA"/>
</dbReference>
<dbReference type="SMR" id="A4KA59"/>
<dbReference type="FunCoup" id="A4KA59">
    <property type="interactions" value="773"/>
</dbReference>
<dbReference type="STRING" id="4577.A4KA59"/>
<dbReference type="Allergome" id="682">
    <property type="allergen name" value="Zea m 12"/>
</dbReference>
<dbReference type="InParanoid" id="A4KA59"/>
<dbReference type="Proteomes" id="UP000007305">
    <property type="component" value="Unplaced"/>
</dbReference>
<dbReference type="ExpressionAtlas" id="A4KA59">
    <property type="expression patterns" value="baseline and differential"/>
</dbReference>
<dbReference type="GO" id="GO:0005938">
    <property type="term" value="C:cell cortex"/>
    <property type="evidence" value="ECO:0000318"/>
    <property type="project" value="GO_Central"/>
</dbReference>
<dbReference type="GO" id="GO:0005856">
    <property type="term" value="C:cytoskeleton"/>
    <property type="evidence" value="ECO:0007669"/>
    <property type="project" value="UniProtKB-SubCell"/>
</dbReference>
<dbReference type="GO" id="GO:0003785">
    <property type="term" value="F:actin monomer binding"/>
    <property type="evidence" value="ECO:0000318"/>
    <property type="project" value="GO_Central"/>
</dbReference>
<dbReference type="GO" id="GO:0070064">
    <property type="term" value="F:proline-rich region binding"/>
    <property type="evidence" value="ECO:0007669"/>
    <property type="project" value="UniProtKB-ARBA"/>
</dbReference>
<dbReference type="GO" id="GO:0007097">
    <property type="term" value="P:nuclear migration"/>
    <property type="evidence" value="ECO:0007669"/>
    <property type="project" value="UniProtKB-ARBA"/>
</dbReference>
<dbReference type="GO" id="GO:0032956">
    <property type="term" value="P:regulation of actin cytoskeleton organization"/>
    <property type="evidence" value="ECO:0007669"/>
    <property type="project" value="UniProtKB-ARBA"/>
</dbReference>
<dbReference type="CDD" id="cd00148">
    <property type="entry name" value="PROF"/>
    <property type="match status" value="1"/>
</dbReference>
<dbReference type="FunFam" id="3.30.450.30:FF:000001">
    <property type="entry name" value="Profilin"/>
    <property type="match status" value="1"/>
</dbReference>
<dbReference type="Gene3D" id="3.30.450.30">
    <property type="entry name" value="Dynein light chain 2a, cytoplasmic"/>
    <property type="match status" value="1"/>
</dbReference>
<dbReference type="InterPro" id="IPR048278">
    <property type="entry name" value="PFN"/>
</dbReference>
<dbReference type="InterPro" id="IPR005455">
    <property type="entry name" value="PFN_euk"/>
</dbReference>
<dbReference type="InterPro" id="IPR036140">
    <property type="entry name" value="PFN_sf"/>
</dbReference>
<dbReference type="InterPro" id="IPR027310">
    <property type="entry name" value="Profilin_CS"/>
</dbReference>
<dbReference type="PANTHER" id="PTHR11604">
    <property type="entry name" value="PROFILIN"/>
    <property type="match status" value="1"/>
</dbReference>
<dbReference type="PANTHER" id="PTHR11604:SF67">
    <property type="entry name" value="PROFILIN LP04"/>
    <property type="match status" value="1"/>
</dbReference>
<dbReference type="Pfam" id="PF00235">
    <property type="entry name" value="Profilin"/>
    <property type="match status" value="1"/>
</dbReference>
<dbReference type="PRINTS" id="PR00392">
    <property type="entry name" value="PROFILIN"/>
</dbReference>
<dbReference type="PRINTS" id="PR01640">
    <property type="entry name" value="PROFILINPLNT"/>
</dbReference>
<dbReference type="SMART" id="SM00392">
    <property type="entry name" value="PROF"/>
    <property type="match status" value="1"/>
</dbReference>
<dbReference type="SUPFAM" id="SSF55770">
    <property type="entry name" value="Profilin (actin-binding protein)"/>
    <property type="match status" value="1"/>
</dbReference>
<dbReference type="PROSITE" id="PS00414">
    <property type="entry name" value="PROFILIN"/>
    <property type="match status" value="1"/>
</dbReference>
<sequence length="131" mass="14245">MSWQAYVDEHLMCEIEGHHLTSAAIVGHDGAVWAQSTAFPQFKTEEMTNIMKDFDEPGFLAPTGLFLGPTKYMVIQGEPGAVIRGKKGSGGITVKKTGQALVIGIYDEPMTPGQCNMVVERLGDYLLEQGL</sequence>
<name>PRO10_MAIZE</name>
<protein>
    <recommendedName>
        <fullName>Profilin-10</fullName>
    </recommendedName>
    <alternativeName>
        <fullName>Pollen allergen Zea m 12</fullName>
    </alternativeName>
    <alternativeName>
        <fullName>Pollen profilin variant 5</fullName>
    </alternativeName>
    <allergenName>Zea m 12</allergenName>
</protein>